<protein>
    <recommendedName>
        <fullName>Periplasmic [NiFeSe] hydrogenase large subunit</fullName>
        <ecNumber>1.12.99.6</ecNumber>
    </recommendedName>
    <alternativeName>
        <fullName>NiFeSe hydrogenlyase large chain</fullName>
    </alternativeName>
</protein>
<name>PHSL_DESBA</name>
<comment type="catalytic activity">
    <reaction>
        <text>H2 + A = AH2</text>
        <dbReference type="Rhea" id="RHEA:12116"/>
        <dbReference type="ChEBI" id="CHEBI:13193"/>
        <dbReference type="ChEBI" id="CHEBI:17499"/>
        <dbReference type="ChEBI" id="CHEBI:18276"/>
        <dbReference type="EC" id="1.12.99.6"/>
    </reaction>
</comment>
<comment type="cofactor">
    <cofactor>
        <name>Fe cation</name>
        <dbReference type="ChEBI" id="CHEBI:24875"/>
    </cofactor>
    <text>Binds 2 irons ions. Iron 1 has 3 cyanide and carbon monoxide ligands. Iron 2 has 3 water ligands.</text>
</comment>
<comment type="cofactor">
    <cofactor>
        <name>Ni(2+)</name>
        <dbReference type="ChEBI" id="CHEBI:49786"/>
    </cofactor>
    <text>Binds 1 nickel ion per subunit.</text>
</comment>
<comment type="subunit">
    <text>Heterodimer of a large and a small subunit.</text>
</comment>
<comment type="subcellular location">
    <subcellularLocation>
        <location>Periplasm</location>
    </subcellularLocation>
</comment>
<comment type="miscellaneous">
    <text>Perhaps the leader of the small subunit serves as a transport vehicle for both subunits.</text>
</comment>
<comment type="similarity">
    <text evidence="1">Belongs to the [NiFe]/[NiFeSe] hydrogenase large subunit family.</text>
</comment>
<feature type="initiator methionine" description="Removed">
    <location>
        <position position="1"/>
    </location>
</feature>
<feature type="chain" id="PRO_0000199704" description="Periplasmic [NiFeSe] hydrogenase large subunit">
    <location>
        <begin position="2"/>
        <end position="514"/>
    </location>
</feature>
<feature type="binding site">
    <location>
        <position position="52"/>
    </location>
    <ligand>
        <name>Fe cation</name>
        <dbReference type="ChEBI" id="CHEBI:24875"/>
        <label>2</label>
    </ligand>
</feature>
<feature type="binding site">
    <location>
        <position position="71"/>
    </location>
    <ligand>
        <name>Ni(2+)</name>
        <dbReference type="ChEBI" id="CHEBI:49786"/>
    </ligand>
</feature>
<feature type="binding site">
    <location>
        <position position="74"/>
    </location>
    <ligand>
        <name>Fe cation</name>
        <dbReference type="ChEBI" id="CHEBI:24875"/>
        <label>1</label>
    </ligand>
</feature>
<feature type="binding site">
    <location>
        <position position="74"/>
    </location>
    <ligand>
        <name>Ni(2+)</name>
        <dbReference type="ChEBI" id="CHEBI:49786"/>
    </ligand>
</feature>
<feature type="binding site">
    <location>
        <position position="445"/>
    </location>
    <ligand>
        <name>Fe cation</name>
        <dbReference type="ChEBI" id="CHEBI:24875"/>
        <label>2</label>
    </ligand>
</feature>
<feature type="binding site">
    <location>
        <position position="493"/>
    </location>
    <ligand>
        <name>Ni(2+)</name>
        <dbReference type="ChEBI" id="CHEBI:49786"/>
    </ligand>
</feature>
<feature type="binding site">
    <location>
        <position position="496"/>
    </location>
    <ligand>
        <name>Fe cation</name>
        <dbReference type="ChEBI" id="CHEBI:24875"/>
        <label>1</label>
    </ligand>
</feature>
<feature type="binding site">
    <location>
        <position position="496"/>
    </location>
    <ligand>
        <name>Ni(2+)</name>
        <dbReference type="ChEBI" id="CHEBI:49786"/>
    </ligand>
</feature>
<feature type="binding site">
    <location>
        <position position="499"/>
    </location>
    <ligand>
        <name>Fe cation</name>
        <dbReference type="ChEBI" id="CHEBI:24875"/>
        <label>2</label>
    </ligand>
</feature>
<feature type="non-standard amino acid" description="Selenocysteine">
    <location>
        <position position="493"/>
    </location>
</feature>
<feature type="strand" evidence="2">
    <location>
        <begin position="14"/>
        <end position="19"/>
    </location>
</feature>
<feature type="strand" evidence="2">
    <location>
        <begin position="22"/>
        <end position="25"/>
    </location>
</feature>
<feature type="strand" evidence="2">
    <location>
        <begin position="27"/>
        <end position="34"/>
    </location>
</feature>
<feature type="strand" evidence="2">
    <location>
        <begin position="37"/>
        <end position="45"/>
    </location>
</feature>
<feature type="helix" evidence="2">
    <location>
        <begin position="51"/>
        <end position="54"/>
    </location>
</feature>
<feature type="turn" evidence="2">
    <location>
        <begin position="55"/>
        <end position="57"/>
    </location>
</feature>
<feature type="helix" evidence="2">
    <location>
        <begin position="60"/>
        <end position="62"/>
    </location>
</feature>
<feature type="helix" evidence="2">
    <location>
        <begin position="63"/>
        <end position="66"/>
    </location>
</feature>
<feature type="helix" evidence="2">
    <location>
        <begin position="67"/>
        <end position="70"/>
    </location>
</feature>
<feature type="strand" evidence="2">
    <location>
        <begin position="72"/>
        <end position="74"/>
    </location>
</feature>
<feature type="helix" evidence="2">
    <location>
        <begin position="75"/>
        <end position="90"/>
    </location>
</feature>
<feature type="helix" evidence="2">
    <location>
        <begin position="96"/>
        <end position="120"/>
    </location>
</feature>
<feature type="helix" evidence="2">
    <location>
        <begin position="123"/>
        <end position="125"/>
    </location>
</feature>
<feature type="helix" evidence="2">
    <location>
        <begin position="145"/>
        <end position="148"/>
    </location>
</feature>
<feature type="helix" evidence="2">
    <location>
        <begin position="152"/>
        <end position="184"/>
    </location>
</feature>
<feature type="strand" evidence="2">
    <location>
        <begin position="185"/>
        <end position="189"/>
    </location>
</feature>
<feature type="strand" evidence="2">
    <location>
        <begin position="191"/>
        <end position="194"/>
    </location>
</feature>
<feature type="strand" evidence="2">
    <location>
        <begin position="197"/>
        <end position="200"/>
    </location>
</feature>
<feature type="helix" evidence="2">
    <location>
        <begin position="204"/>
        <end position="223"/>
    </location>
</feature>
<feature type="helix" evidence="2">
    <location>
        <begin position="225"/>
        <end position="235"/>
    </location>
</feature>
<feature type="helix" evidence="2">
    <location>
        <begin position="237"/>
        <end position="240"/>
    </location>
</feature>
<feature type="strand" evidence="2">
    <location>
        <begin position="249"/>
        <end position="251"/>
    </location>
</feature>
<feature type="strand" evidence="2">
    <location>
        <begin position="254"/>
        <end position="258"/>
    </location>
</feature>
<feature type="strand" evidence="2">
    <location>
        <begin position="264"/>
        <end position="266"/>
    </location>
</feature>
<feature type="strand" evidence="2">
    <location>
        <begin position="269"/>
        <end position="272"/>
    </location>
</feature>
<feature type="strand" evidence="2">
    <location>
        <begin position="275"/>
        <end position="277"/>
    </location>
</feature>
<feature type="helix" evidence="2">
    <location>
        <begin position="281"/>
        <end position="283"/>
    </location>
</feature>
<feature type="strand" evidence="2">
    <location>
        <begin position="284"/>
        <end position="287"/>
    </location>
</feature>
<feature type="strand" evidence="2">
    <location>
        <begin position="296"/>
        <end position="299"/>
    </location>
</feature>
<feature type="helix" evidence="2">
    <location>
        <begin position="303"/>
        <end position="305"/>
    </location>
</feature>
<feature type="strand" evidence="2">
    <location>
        <begin position="323"/>
        <end position="326"/>
    </location>
</feature>
<feature type="helix" evidence="2">
    <location>
        <begin position="335"/>
        <end position="342"/>
    </location>
</feature>
<feature type="helix" evidence="2">
    <location>
        <begin position="348"/>
        <end position="358"/>
    </location>
</feature>
<feature type="helix" evidence="2">
    <location>
        <begin position="365"/>
        <end position="372"/>
    </location>
</feature>
<feature type="helix" evidence="2">
    <location>
        <begin position="375"/>
        <end position="399"/>
    </location>
</feature>
<feature type="strand" evidence="2">
    <location>
        <begin position="414"/>
        <end position="424"/>
    </location>
</feature>
<feature type="strand" evidence="2">
    <location>
        <begin position="427"/>
        <end position="436"/>
    </location>
</feature>
<feature type="strand" evidence="2">
    <location>
        <begin position="439"/>
        <end position="447"/>
    </location>
</feature>
<feature type="helix" evidence="2">
    <location>
        <begin position="449"/>
        <end position="452"/>
    </location>
</feature>
<feature type="helix" evidence="2">
    <location>
        <begin position="464"/>
        <end position="469"/>
    </location>
</feature>
<feature type="helix" evidence="2">
    <location>
        <begin position="481"/>
        <end position="489"/>
    </location>
</feature>
<feature type="helix" evidence="2">
    <location>
        <begin position="494"/>
        <end position="498"/>
    </location>
</feature>
<evidence type="ECO:0000305" key="1"/>
<evidence type="ECO:0007829" key="2">
    <source>
        <dbReference type="PDB" id="1CC1"/>
    </source>
</evidence>
<accession>P13065</accession>
<sequence>MSQAATPAADGKVKISIDPLTRVEGHLKIEVEVKDGKVVDAKCSGGMFRGFEQILRGRDPRDSSQIVQRICGVCPTAHCTASVMAQDDAFGVKVTTNGRITRNLIFGANYLQSHILHFYHLAALDYVKGPDVSPFVPRYANADLLTDRIKDGAKADATNTYGLNQYLKALEIRRICHEMVAMFGGRMPHVQGMVVGGATEIPTADKVAEYAARFKEVQKFVIEEYLPLIYTLGSVYTDLFETGIGWKNVIAFGVFPEDDDYKTFLLKPGVYIDGKDEEFDSKLVKEYVGHSFFDHSAPGGLHYSVGETNPNPDKPGAYSFVKAPRYKDKPCEVGPLARMWVQNPELSPVGQKLLKELYGIEAKKFRDLGDKAFSIMGRHVLVAEETWLTAVAVEKWLKQVQPGAETYVKSEIPDAAEGTGFTEAPRGALLHYLKIKDKKIENYQIVSATLWNANPRDDMGQRGPIEEALIGVPVPDIKNPVNVGRLVRSYDPULGCAVHVLHAETGEEHVVNID</sequence>
<keyword id="KW-0002">3D-structure</keyword>
<keyword id="KW-0408">Iron</keyword>
<keyword id="KW-0479">Metal-binding</keyword>
<keyword id="KW-0533">Nickel</keyword>
<keyword id="KW-0560">Oxidoreductase</keyword>
<keyword id="KW-0574">Periplasm</keyword>
<keyword id="KW-0712">Selenocysteine</keyword>
<reference key="1">
    <citation type="journal article" date="1987" name="J. Bacteriol.">
        <title>Cloning and sequencing of the genes encoding the large and small subunits of the periplasmic (NiFeSe) hydrogenase of Desulfovibrio baculatus.</title>
        <authorList>
            <person name="Menon N.K."/>
            <person name="Peck H.D. Jr."/>
            <person name="le Gall J."/>
            <person name="Przybyla A.E."/>
        </authorList>
    </citation>
    <scope>NUCLEOTIDE SEQUENCE [GENOMIC DNA]</scope>
</reference>
<reference key="2">
    <citation type="journal article" date="1988" name="J. Bacteriol.">
        <authorList>
            <person name="Menon N.K."/>
            <person name="Pect H.D. Jr."/>
            <person name="le Gall J."/>
            <person name="Przybyla A.E."/>
        </authorList>
    </citation>
    <scope>ERRATUM OF PUBMED:3316183</scope>
    <scope>SEQUENCE REVISION</scope>
</reference>
<reference key="3">
    <citation type="journal article" date="1999" name="Structure">
        <title>The crystal structure of a reduced [NiFeSe] hydrogenase provides an image of the activated catalytic center.</title>
        <authorList>
            <person name="Garcin E."/>
            <person name="Vernede X."/>
            <person name="Hatchikian E.C."/>
            <person name="Volbeda A."/>
            <person name="Frey M."/>
            <person name="Fontecilla-Camps J.-C."/>
        </authorList>
    </citation>
    <scope>X-RAY CRYSTALLOGRAPHY (2.15 ANGSTROMS)</scope>
    <scope>SELENOCYSTEINE AT SEC-493</scope>
</reference>
<dbReference type="EC" id="1.12.99.6"/>
<dbReference type="EMBL" id="M18271">
    <property type="protein sequence ID" value="AAA23375.2"/>
    <property type="molecule type" value="Genomic_DNA"/>
</dbReference>
<dbReference type="PIR" id="A33101">
    <property type="entry name" value="HQDVLB"/>
</dbReference>
<dbReference type="PDB" id="1CC1">
    <property type="method" value="X-ray"/>
    <property type="resolution" value="2.15 A"/>
    <property type="chains" value="L=2-499"/>
</dbReference>
<dbReference type="PDBsum" id="1CC1"/>
<dbReference type="SMR" id="P13065"/>
<dbReference type="DIP" id="DIP-6125N"/>
<dbReference type="IntAct" id="P13065">
    <property type="interactions" value="1"/>
</dbReference>
<dbReference type="EvolutionaryTrace" id="P13065"/>
<dbReference type="GO" id="GO:0042597">
    <property type="term" value="C:periplasmic space"/>
    <property type="evidence" value="ECO:0007669"/>
    <property type="project" value="UniProtKB-SubCell"/>
</dbReference>
<dbReference type="GO" id="GO:0008901">
    <property type="term" value="F:ferredoxin hydrogenase activity"/>
    <property type="evidence" value="ECO:0007669"/>
    <property type="project" value="InterPro"/>
</dbReference>
<dbReference type="GO" id="GO:0033748">
    <property type="term" value="F:hydrogenase (acceptor) activity"/>
    <property type="evidence" value="ECO:0007669"/>
    <property type="project" value="UniProtKB-EC"/>
</dbReference>
<dbReference type="GO" id="GO:0016151">
    <property type="term" value="F:nickel cation binding"/>
    <property type="evidence" value="ECO:0007669"/>
    <property type="project" value="InterPro"/>
</dbReference>
<dbReference type="FunFam" id="1.10.645.10:FF:000002">
    <property type="entry name" value="Hydrogenase 2 large subunit"/>
    <property type="match status" value="1"/>
</dbReference>
<dbReference type="Gene3D" id="1.10.645.10">
    <property type="entry name" value="Cytochrome-c3 Hydrogenase, chain B"/>
    <property type="match status" value="1"/>
</dbReference>
<dbReference type="InterPro" id="IPR001501">
    <property type="entry name" value="Ni-dep_hyd_lsu"/>
</dbReference>
<dbReference type="InterPro" id="IPR018194">
    <property type="entry name" value="Ni-dep_hyd_lsu_Ni_BS"/>
</dbReference>
<dbReference type="InterPro" id="IPR029014">
    <property type="entry name" value="NiFe-Hase_large"/>
</dbReference>
<dbReference type="InterPro" id="IPR050867">
    <property type="entry name" value="NiFe/NiFeSe_hydrgnase_LSU"/>
</dbReference>
<dbReference type="NCBIfam" id="NF045518">
    <property type="entry name" value="H2_NiFeSe_large"/>
    <property type="match status" value="1"/>
</dbReference>
<dbReference type="NCBIfam" id="NF033181">
    <property type="entry name" value="NiFeSe_hydrog"/>
    <property type="match status" value="1"/>
</dbReference>
<dbReference type="PANTHER" id="PTHR42958">
    <property type="entry name" value="HYDROGENASE-2 LARGE CHAIN"/>
    <property type="match status" value="1"/>
</dbReference>
<dbReference type="PANTHER" id="PTHR42958:SF2">
    <property type="entry name" value="UPTAKE HYDROGENASE LARGE SUBUNIT"/>
    <property type="match status" value="1"/>
</dbReference>
<dbReference type="Pfam" id="PF00374">
    <property type="entry name" value="NiFeSe_Hases"/>
    <property type="match status" value="2"/>
</dbReference>
<dbReference type="SUPFAM" id="SSF56762">
    <property type="entry name" value="HydB/Nqo4-like"/>
    <property type="match status" value="1"/>
</dbReference>
<dbReference type="PROSITE" id="PS00507">
    <property type="entry name" value="NI_HGENASE_L_1"/>
    <property type="match status" value="1"/>
</dbReference>
<dbReference type="PROSITE" id="PS00508">
    <property type="entry name" value="NI_HGENASE_L_2"/>
    <property type="match status" value="1"/>
</dbReference>
<proteinExistence type="evidence at protein level"/>
<organism>
    <name type="scientific">Desulfomicrobium baculatum</name>
    <name type="common">Desulfovibrio baculatus</name>
    <dbReference type="NCBI Taxonomy" id="899"/>
    <lineage>
        <taxon>Bacteria</taxon>
        <taxon>Pseudomonadati</taxon>
        <taxon>Thermodesulfobacteriota</taxon>
        <taxon>Desulfovibrionia</taxon>
        <taxon>Desulfovibrionales</taxon>
        <taxon>Desulfomicrobiaceae</taxon>
        <taxon>Desulfomicrobium</taxon>
    </lineage>
</organism>